<proteinExistence type="inferred from homology"/>
<dbReference type="EMBL" id="AE017143">
    <property type="protein sequence ID" value="AAP96034.1"/>
    <property type="molecule type" value="Genomic_DNA"/>
</dbReference>
<dbReference type="RefSeq" id="WP_010945083.1">
    <property type="nucleotide sequence ID" value="NC_002940.2"/>
</dbReference>
<dbReference type="SMR" id="Q7VM29"/>
<dbReference type="STRING" id="233412.HD_1183"/>
<dbReference type="KEGG" id="hdu:HD_1183"/>
<dbReference type="eggNOG" id="COG1160">
    <property type="taxonomic scope" value="Bacteria"/>
</dbReference>
<dbReference type="HOGENOM" id="CLU_016077_5_1_6"/>
<dbReference type="OrthoDB" id="9805918at2"/>
<dbReference type="Proteomes" id="UP000001022">
    <property type="component" value="Chromosome"/>
</dbReference>
<dbReference type="GO" id="GO:0005525">
    <property type="term" value="F:GTP binding"/>
    <property type="evidence" value="ECO:0007669"/>
    <property type="project" value="UniProtKB-UniRule"/>
</dbReference>
<dbReference type="GO" id="GO:0043022">
    <property type="term" value="F:ribosome binding"/>
    <property type="evidence" value="ECO:0007669"/>
    <property type="project" value="TreeGrafter"/>
</dbReference>
<dbReference type="GO" id="GO:0042254">
    <property type="term" value="P:ribosome biogenesis"/>
    <property type="evidence" value="ECO:0007669"/>
    <property type="project" value="UniProtKB-KW"/>
</dbReference>
<dbReference type="CDD" id="cd01894">
    <property type="entry name" value="EngA1"/>
    <property type="match status" value="1"/>
</dbReference>
<dbReference type="CDD" id="cd01895">
    <property type="entry name" value="EngA2"/>
    <property type="match status" value="1"/>
</dbReference>
<dbReference type="FunFam" id="3.30.300.20:FF:000004">
    <property type="entry name" value="GTPase Der"/>
    <property type="match status" value="1"/>
</dbReference>
<dbReference type="FunFam" id="3.40.50.300:FF:000040">
    <property type="entry name" value="GTPase Der"/>
    <property type="match status" value="1"/>
</dbReference>
<dbReference type="FunFam" id="3.40.50.300:FF:000057">
    <property type="entry name" value="GTPase Der"/>
    <property type="match status" value="1"/>
</dbReference>
<dbReference type="Gene3D" id="3.30.300.20">
    <property type="match status" value="1"/>
</dbReference>
<dbReference type="Gene3D" id="3.40.50.300">
    <property type="entry name" value="P-loop containing nucleotide triphosphate hydrolases"/>
    <property type="match status" value="2"/>
</dbReference>
<dbReference type="HAMAP" id="MF_00195">
    <property type="entry name" value="GTPase_Der"/>
    <property type="match status" value="1"/>
</dbReference>
<dbReference type="InterPro" id="IPR031166">
    <property type="entry name" value="G_ENGA"/>
</dbReference>
<dbReference type="InterPro" id="IPR006073">
    <property type="entry name" value="GTP-bd"/>
</dbReference>
<dbReference type="InterPro" id="IPR016484">
    <property type="entry name" value="GTPase_Der"/>
</dbReference>
<dbReference type="InterPro" id="IPR032859">
    <property type="entry name" value="KH_dom-like"/>
</dbReference>
<dbReference type="InterPro" id="IPR015946">
    <property type="entry name" value="KH_dom-like_a/b"/>
</dbReference>
<dbReference type="InterPro" id="IPR027417">
    <property type="entry name" value="P-loop_NTPase"/>
</dbReference>
<dbReference type="InterPro" id="IPR005225">
    <property type="entry name" value="Small_GTP-bd"/>
</dbReference>
<dbReference type="NCBIfam" id="TIGR03594">
    <property type="entry name" value="GTPase_EngA"/>
    <property type="match status" value="1"/>
</dbReference>
<dbReference type="NCBIfam" id="TIGR00231">
    <property type="entry name" value="small_GTP"/>
    <property type="match status" value="2"/>
</dbReference>
<dbReference type="PANTHER" id="PTHR43834">
    <property type="entry name" value="GTPASE DER"/>
    <property type="match status" value="1"/>
</dbReference>
<dbReference type="PANTHER" id="PTHR43834:SF6">
    <property type="entry name" value="GTPASE DER"/>
    <property type="match status" value="1"/>
</dbReference>
<dbReference type="Pfam" id="PF14714">
    <property type="entry name" value="KH_dom-like"/>
    <property type="match status" value="1"/>
</dbReference>
<dbReference type="Pfam" id="PF01926">
    <property type="entry name" value="MMR_HSR1"/>
    <property type="match status" value="2"/>
</dbReference>
<dbReference type="PIRSF" id="PIRSF006485">
    <property type="entry name" value="GTP-binding_EngA"/>
    <property type="match status" value="1"/>
</dbReference>
<dbReference type="PRINTS" id="PR00326">
    <property type="entry name" value="GTP1OBG"/>
</dbReference>
<dbReference type="SUPFAM" id="SSF52540">
    <property type="entry name" value="P-loop containing nucleoside triphosphate hydrolases"/>
    <property type="match status" value="2"/>
</dbReference>
<dbReference type="PROSITE" id="PS51712">
    <property type="entry name" value="G_ENGA"/>
    <property type="match status" value="2"/>
</dbReference>
<reference key="1">
    <citation type="submission" date="2003-06" db="EMBL/GenBank/DDBJ databases">
        <title>The complete genome sequence of Haemophilus ducreyi.</title>
        <authorList>
            <person name="Munson R.S. Jr."/>
            <person name="Ray W.C."/>
            <person name="Mahairas G."/>
            <person name="Sabo P."/>
            <person name="Mungur R."/>
            <person name="Johnson L."/>
            <person name="Nguyen D."/>
            <person name="Wang J."/>
            <person name="Forst C."/>
            <person name="Hood L."/>
        </authorList>
    </citation>
    <scope>NUCLEOTIDE SEQUENCE [LARGE SCALE GENOMIC DNA]</scope>
    <source>
        <strain>35000HP / ATCC 700724</strain>
    </source>
</reference>
<accession>Q7VM29</accession>
<sequence>MTPVVALVGRPNVGKSTLFNRLTRTRDALVADFPGLTRDRKYGHANIAGHDFIVIDTGGIDGTEEGIEEKMAEQSLLAIEEADVVLFLVDARAGLLPADIGIAQYLRQREKTTVVVANKTDGIDADSHCGEFYQLGLGEVAKIAAAQGRGVTQLIEQVLSPLATALNSEQADENEENLATETNEFDEWNQDFDFNNEEDTALLDEALDEENSESIADKNIKIAIIGRPNVGKSTLTNRILGEERVVVYDMPGTTRDSIYIPMERDGQEYTIIDTAGVRKRGKINLAVEKFSVIKTLQAIQDANVVLLTIDAREGISDQDLSLLGFILNAGRSLVIVVNKWDGLSYDIKEQVKSELDRRLDFIDFARVHFISALHGSGVGNLFDSVKEAYACATQKTSTSMLTRILHMAADEHQPPLVNGRRVKLKYAHPGGYNPPIIVIHGNQVEKLSDAYKRYLSNYFRKSLKIIGSPIRIQFQEGNNPFAGKKNKLTPNQLRKRKRLMKFIKKTKNKK</sequence>
<keyword id="KW-0342">GTP-binding</keyword>
<keyword id="KW-0547">Nucleotide-binding</keyword>
<keyword id="KW-1185">Reference proteome</keyword>
<keyword id="KW-0677">Repeat</keyword>
<keyword id="KW-0690">Ribosome biogenesis</keyword>
<protein>
    <recommendedName>
        <fullName evidence="1">GTPase Der</fullName>
    </recommendedName>
    <alternativeName>
        <fullName evidence="1">GTP-binding protein EngA</fullName>
    </alternativeName>
</protein>
<gene>
    <name evidence="1" type="primary">der</name>
    <name type="synonym">engA</name>
    <name type="ordered locus">HD_1183</name>
</gene>
<comment type="function">
    <text evidence="1">GTPase that plays an essential role in the late steps of ribosome biogenesis.</text>
</comment>
<comment type="subunit">
    <text evidence="1">Associates with the 50S ribosomal subunit.</text>
</comment>
<comment type="similarity">
    <text evidence="1">Belongs to the TRAFAC class TrmE-Era-EngA-EngB-Septin-like GTPase superfamily. EngA (Der) GTPase family.</text>
</comment>
<name>DER_HAEDU</name>
<evidence type="ECO:0000255" key="1">
    <source>
        <dbReference type="HAMAP-Rule" id="MF_00195"/>
    </source>
</evidence>
<feature type="chain" id="PRO_0000178997" description="GTPase Der">
    <location>
        <begin position="1"/>
        <end position="510"/>
    </location>
</feature>
<feature type="domain" description="EngA-type G 1">
    <location>
        <begin position="3"/>
        <end position="166"/>
    </location>
</feature>
<feature type="domain" description="EngA-type G 2">
    <location>
        <begin position="220"/>
        <end position="393"/>
    </location>
</feature>
<feature type="domain" description="KH-like" evidence="1">
    <location>
        <begin position="394"/>
        <end position="478"/>
    </location>
</feature>
<feature type="binding site" evidence="1">
    <location>
        <begin position="9"/>
        <end position="16"/>
    </location>
    <ligand>
        <name>GTP</name>
        <dbReference type="ChEBI" id="CHEBI:37565"/>
        <label>1</label>
    </ligand>
</feature>
<feature type="binding site" evidence="1">
    <location>
        <begin position="56"/>
        <end position="60"/>
    </location>
    <ligand>
        <name>GTP</name>
        <dbReference type="ChEBI" id="CHEBI:37565"/>
        <label>1</label>
    </ligand>
</feature>
<feature type="binding site" evidence="1">
    <location>
        <begin position="118"/>
        <end position="121"/>
    </location>
    <ligand>
        <name>GTP</name>
        <dbReference type="ChEBI" id="CHEBI:37565"/>
        <label>1</label>
    </ligand>
</feature>
<feature type="binding site" evidence="1">
    <location>
        <begin position="226"/>
        <end position="233"/>
    </location>
    <ligand>
        <name>GTP</name>
        <dbReference type="ChEBI" id="CHEBI:37565"/>
        <label>2</label>
    </ligand>
</feature>
<feature type="binding site" evidence="1">
    <location>
        <begin position="273"/>
        <end position="277"/>
    </location>
    <ligand>
        <name>GTP</name>
        <dbReference type="ChEBI" id="CHEBI:37565"/>
        <label>2</label>
    </ligand>
</feature>
<feature type="binding site" evidence="1">
    <location>
        <begin position="338"/>
        <end position="341"/>
    </location>
    <ligand>
        <name>GTP</name>
        <dbReference type="ChEBI" id="CHEBI:37565"/>
        <label>2</label>
    </ligand>
</feature>
<organism>
    <name type="scientific">Haemophilus ducreyi (strain 35000HP / ATCC 700724)</name>
    <dbReference type="NCBI Taxonomy" id="233412"/>
    <lineage>
        <taxon>Bacteria</taxon>
        <taxon>Pseudomonadati</taxon>
        <taxon>Pseudomonadota</taxon>
        <taxon>Gammaproteobacteria</taxon>
        <taxon>Pasteurellales</taxon>
        <taxon>Pasteurellaceae</taxon>
        <taxon>Haemophilus</taxon>
    </lineage>
</organism>